<keyword id="KW-0227">DNA damage</keyword>
<keyword id="KW-0234">DNA repair</keyword>
<name>MUTL_PETMO</name>
<proteinExistence type="inferred from homology"/>
<sequence length="621" mass="71151">MRIKVLNPEVVMKIAAGEVVSGPSSVVKELVENSLDAQADSITVEILDGGKSLIKVDDNGIGMEEEELELSILPHTTSKIFSIEDLYKLKTFGFRGEALSSISRVSRMKMTSKPPEKEVGTMLEILGGKIIEKKRVNSSNGTKIEIMDLFFNIPARRKFLKSDSAEGRYVTEIIEKFAFTNNINLTYIRDHKEIYKFSSDMDLITKCLKIYPELKRDDLIEIEHNDSLCKISGVISQPKVGRNNRTAQHFFVNNRYIKVASLYSVLETGYGEILEKSIHPYGIIFIEIPPDMVDVNVHPQKLEVKFTDEQMVASLLKKVVRESLKKNTHFTMEFINSNDTIDLNKKTSSFSVQNLYNKNESSQKVDFSQNPTNTDYFENTDEFFNNSEIEDLQEEQNHFDNSYKLYEPSKTFDFKGFEYQKNQTFTPVEKINSLEKLRILGIVAERYLVVEGEDKLLLVDFHAAHERYIYEILRENVYEKGGLTSDLLLTPVIIALDEVRKGIILENKDHLEKLGIKLEEDEKEIIVKGLPSLVKIDDAERLIFEIADDLRISNFDQQPNILDKNLATMACRAAVKTRDNPTGMETLLNTIFEKKLLTCPHGRPIMIQITFKTLDKYFGRI</sequence>
<protein>
    <recommendedName>
        <fullName evidence="1">DNA mismatch repair protein MutL</fullName>
    </recommendedName>
</protein>
<feature type="chain" id="PRO_1000076703" description="DNA mismatch repair protein MutL">
    <location>
        <begin position="1"/>
        <end position="621"/>
    </location>
</feature>
<dbReference type="EMBL" id="CP000879">
    <property type="protein sequence ID" value="ABX31333.1"/>
    <property type="molecule type" value="Genomic_DNA"/>
</dbReference>
<dbReference type="RefSeq" id="WP_012208437.1">
    <property type="nucleotide sequence ID" value="NC_010003.1"/>
</dbReference>
<dbReference type="SMR" id="A9BJB9"/>
<dbReference type="STRING" id="403833.Pmob_0599"/>
<dbReference type="KEGG" id="pmo:Pmob_0599"/>
<dbReference type="eggNOG" id="COG0323">
    <property type="taxonomic scope" value="Bacteria"/>
</dbReference>
<dbReference type="HOGENOM" id="CLU_004131_4_1_0"/>
<dbReference type="OrthoDB" id="9763467at2"/>
<dbReference type="Proteomes" id="UP000000789">
    <property type="component" value="Chromosome"/>
</dbReference>
<dbReference type="GO" id="GO:0032300">
    <property type="term" value="C:mismatch repair complex"/>
    <property type="evidence" value="ECO:0007669"/>
    <property type="project" value="InterPro"/>
</dbReference>
<dbReference type="GO" id="GO:0005524">
    <property type="term" value="F:ATP binding"/>
    <property type="evidence" value="ECO:0007669"/>
    <property type="project" value="InterPro"/>
</dbReference>
<dbReference type="GO" id="GO:0016887">
    <property type="term" value="F:ATP hydrolysis activity"/>
    <property type="evidence" value="ECO:0007669"/>
    <property type="project" value="InterPro"/>
</dbReference>
<dbReference type="GO" id="GO:0140664">
    <property type="term" value="F:ATP-dependent DNA damage sensor activity"/>
    <property type="evidence" value="ECO:0007669"/>
    <property type="project" value="InterPro"/>
</dbReference>
<dbReference type="GO" id="GO:0030983">
    <property type="term" value="F:mismatched DNA binding"/>
    <property type="evidence" value="ECO:0007669"/>
    <property type="project" value="InterPro"/>
</dbReference>
<dbReference type="GO" id="GO:0006298">
    <property type="term" value="P:mismatch repair"/>
    <property type="evidence" value="ECO:0007669"/>
    <property type="project" value="UniProtKB-UniRule"/>
</dbReference>
<dbReference type="CDD" id="cd16926">
    <property type="entry name" value="HATPase_MutL-MLH-PMS-like"/>
    <property type="match status" value="1"/>
</dbReference>
<dbReference type="CDD" id="cd00782">
    <property type="entry name" value="MutL_Trans"/>
    <property type="match status" value="1"/>
</dbReference>
<dbReference type="FunFam" id="3.30.565.10:FF:000003">
    <property type="entry name" value="DNA mismatch repair endonuclease MutL"/>
    <property type="match status" value="1"/>
</dbReference>
<dbReference type="Gene3D" id="3.30.230.10">
    <property type="match status" value="1"/>
</dbReference>
<dbReference type="Gene3D" id="3.30.565.10">
    <property type="entry name" value="Histidine kinase-like ATPase, C-terminal domain"/>
    <property type="match status" value="1"/>
</dbReference>
<dbReference type="Gene3D" id="3.30.1540.20">
    <property type="entry name" value="MutL, C-terminal domain, dimerisation subdomain"/>
    <property type="match status" value="1"/>
</dbReference>
<dbReference type="Gene3D" id="3.30.1370.100">
    <property type="entry name" value="MutL, C-terminal domain, regulatory subdomain"/>
    <property type="match status" value="1"/>
</dbReference>
<dbReference type="HAMAP" id="MF_00149">
    <property type="entry name" value="DNA_mis_repair"/>
    <property type="match status" value="1"/>
</dbReference>
<dbReference type="InterPro" id="IPR014762">
    <property type="entry name" value="DNA_mismatch_repair_CS"/>
</dbReference>
<dbReference type="InterPro" id="IPR020667">
    <property type="entry name" value="DNA_mismatch_repair_MutL"/>
</dbReference>
<dbReference type="InterPro" id="IPR013507">
    <property type="entry name" value="DNA_mismatch_S5_2-like"/>
</dbReference>
<dbReference type="InterPro" id="IPR036890">
    <property type="entry name" value="HATPase_C_sf"/>
</dbReference>
<dbReference type="InterPro" id="IPR002099">
    <property type="entry name" value="MutL/Mlh/PMS"/>
</dbReference>
<dbReference type="InterPro" id="IPR038973">
    <property type="entry name" value="MutL/Mlh/Pms-like"/>
</dbReference>
<dbReference type="InterPro" id="IPR014790">
    <property type="entry name" value="MutL_C"/>
</dbReference>
<dbReference type="InterPro" id="IPR042120">
    <property type="entry name" value="MutL_C_dimsub"/>
</dbReference>
<dbReference type="InterPro" id="IPR042121">
    <property type="entry name" value="MutL_C_regsub"/>
</dbReference>
<dbReference type="InterPro" id="IPR037198">
    <property type="entry name" value="MutL_C_sf"/>
</dbReference>
<dbReference type="InterPro" id="IPR020568">
    <property type="entry name" value="Ribosomal_Su5_D2-typ_SF"/>
</dbReference>
<dbReference type="InterPro" id="IPR014721">
    <property type="entry name" value="Ribsml_uS5_D2-typ_fold_subgr"/>
</dbReference>
<dbReference type="NCBIfam" id="TIGR00585">
    <property type="entry name" value="mutl"/>
    <property type="match status" value="1"/>
</dbReference>
<dbReference type="PANTHER" id="PTHR10073">
    <property type="entry name" value="DNA MISMATCH REPAIR PROTEIN MLH, PMS, MUTL"/>
    <property type="match status" value="1"/>
</dbReference>
<dbReference type="PANTHER" id="PTHR10073:SF12">
    <property type="entry name" value="DNA MISMATCH REPAIR PROTEIN MLH1"/>
    <property type="match status" value="1"/>
</dbReference>
<dbReference type="Pfam" id="PF01119">
    <property type="entry name" value="DNA_mis_repair"/>
    <property type="match status" value="1"/>
</dbReference>
<dbReference type="Pfam" id="PF13589">
    <property type="entry name" value="HATPase_c_3"/>
    <property type="match status" value="1"/>
</dbReference>
<dbReference type="Pfam" id="PF08676">
    <property type="entry name" value="MutL_C"/>
    <property type="match status" value="1"/>
</dbReference>
<dbReference type="SMART" id="SM01340">
    <property type="entry name" value="DNA_mis_repair"/>
    <property type="match status" value="1"/>
</dbReference>
<dbReference type="SMART" id="SM00853">
    <property type="entry name" value="MutL_C"/>
    <property type="match status" value="1"/>
</dbReference>
<dbReference type="SUPFAM" id="SSF55874">
    <property type="entry name" value="ATPase domain of HSP90 chaperone/DNA topoisomerase II/histidine kinase"/>
    <property type="match status" value="1"/>
</dbReference>
<dbReference type="SUPFAM" id="SSF118116">
    <property type="entry name" value="DNA mismatch repair protein MutL"/>
    <property type="match status" value="1"/>
</dbReference>
<dbReference type="SUPFAM" id="SSF54211">
    <property type="entry name" value="Ribosomal protein S5 domain 2-like"/>
    <property type="match status" value="1"/>
</dbReference>
<dbReference type="PROSITE" id="PS00058">
    <property type="entry name" value="DNA_MISMATCH_REPAIR_1"/>
    <property type="match status" value="1"/>
</dbReference>
<organism>
    <name type="scientific">Petrotoga mobilis (strain DSM 10674 / SJ95)</name>
    <dbReference type="NCBI Taxonomy" id="403833"/>
    <lineage>
        <taxon>Bacteria</taxon>
        <taxon>Thermotogati</taxon>
        <taxon>Thermotogota</taxon>
        <taxon>Thermotogae</taxon>
        <taxon>Petrotogales</taxon>
        <taxon>Petrotogaceae</taxon>
        <taxon>Petrotoga</taxon>
    </lineage>
</organism>
<comment type="function">
    <text evidence="1">This protein is involved in the repair of mismatches in DNA. It is required for dam-dependent methyl-directed DNA mismatch repair. May act as a 'molecular matchmaker', a protein that promotes the formation of a stable complex between two or more DNA-binding proteins in an ATP-dependent manner without itself being part of a final effector complex.</text>
</comment>
<comment type="similarity">
    <text evidence="1">Belongs to the DNA mismatch repair MutL/HexB family.</text>
</comment>
<reference key="1">
    <citation type="submission" date="2007-11" db="EMBL/GenBank/DDBJ databases">
        <title>Complete sequence of Petroga mobilis SJ95.</title>
        <authorList>
            <consortium name="US DOE Joint Genome Institute"/>
            <person name="Copeland A."/>
            <person name="Lucas S."/>
            <person name="Lapidus A."/>
            <person name="Barry K."/>
            <person name="Glavina del Rio T."/>
            <person name="Dalin E."/>
            <person name="Tice H."/>
            <person name="Pitluck S."/>
            <person name="Meincke L."/>
            <person name="Brettin T."/>
            <person name="Bruce D."/>
            <person name="Detter J.C."/>
            <person name="Han C."/>
            <person name="Kuske C.R."/>
            <person name="Schmutz J."/>
            <person name="Larimer F."/>
            <person name="Land M."/>
            <person name="Hauser L."/>
            <person name="Kyrpides N."/>
            <person name="Mikhailova N."/>
            <person name="Noll K."/>
            <person name="Richardson P."/>
        </authorList>
    </citation>
    <scope>NUCLEOTIDE SEQUENCE [LARGE SCALE GENOMIC DNA]</scope>
    <source>
        <strain>DSM 10674 / SJ95</strain>
    </source>
</reference>
<gene>
    <name evidence="1" type="primary">mutL</name>
    <name type="ordered locus">Pmob_0599</name>
</gene>
<evidence type="ECO:0000255" key="1">
    <source>
        <dbReference type="HAMAP-Rule" id="MF_00149"/>
    </source>
</evidence>
<accession>A9BJB9</accession>